<gene>
    <name evidence="1" type="primary">glsA</name>
    <name type="ordered locus">Sama_2487</name>
</gene>
<keyword id="KW-0378">Hydrolase</keyword>
<keyword id="KW-1185">Reference proteome</keyword>
<sequence length="304" mass="32878">MLEQALLDDLVAKVRPLLGQGKVADYIPALARVSPYKLGIAVTTIDGTTLGAGDWQEAFSIQSISKVFSLTGAMMLYEEREIWSRVGKEPSGHSFNSLVQVELERGIPRNPFINAGALVIADLLQSRLGAPKQRMLEIVRMLSQNHKVCYDKVVADSEYQHSARNAAIAFLMKSFGNFHNDVDKVLRSYFHYCSLSMSCADLSRAMVYLANQGVSLDGNEVVSPTQTRRLNALLATSGLYDGAGEFAYRVGMPGKSGVGGGIIAVIPGDMSVCVWSPALDASGNSLAGTRLLELLAQELGRSIF</sequence>
<accession>A1S8I4</accession>
<proteinExistence type="inferred from homology"/>
<organism>
    <name type="scientific">Shewanella amazonensis (strain ATCC BAA-1098 / SB2B)</name>
    <dbReference type="NCBI Taxonomy" id="326297"/>
    <lineage>
        <taxon>Bacteria</taxon>
        <taxon>Pseudomonadati</taxon>
        <taxon>Pseudomonadota</taxon>
        <taxon>Gammaproteobacteria</taxon>
        <taxon>Alteromonadales</taxon>
        <taxon>Shewanellaceae</taxon>
        <taxon>Shewanella</taxon>
    </lineage>
</organism>
<protein>
    <recommendedName>
        <fullName evidence="1">Glutaminase</fullName>
        <ecNumber evidence="1">3.5.1.2</ecNumber>
    </recommendedName>
</protein>
<reference key="1">
    <citation type="submission" date="2006-12" db="EMBL/GenBank/DDBJ databases">
        <title>Complete sequence of Shewanella amazonensis SB2B.</title>
        <authorList>
            <consortium name="US DOE Joint Genome Institute"/>
            <person name="Copeland A."/>
            <person name="Lucas S."/>
            <person name="Lapidus A."/>
            <person name="Barry K."/>
            <person name="Detter J.C."/>
            <person name="Glavina del Rio T."/>
            <person name="Hammon N."/>
            <person name="Israni S."/>
            <person name="Dalin E."/>
            <person name="Tice H."/>
            <person name="Pitluck S."/>
            <person name="Munk A.C."/>
            <person name="Brettin T."/>
            <person name="Bruce D."/>
            <person name="Han C."/>
            <person name="Tapia R."/>
            <person name="Gilna P."/>
            <person name="Schmutz J."/>
            <person name="Larimer F."/>
            <person name="Land M."/>
            <person name="Hauser L."/>
            <person name="Kyrpides N."/>
            <person name="Mikhailova N."/>
            <person name="Fredrickson J."/>
            <person name="Richardson P."/>
        </authorList>
    </citation>
    <scope>NUCLEOTIDE SEQUENCE [LARGE SCALE GENOMIC DNA]</scope>
    <source>
        <strain>ATCC BAA-1098 / SB2B</strain>
    </source>
</reference>
<name>GLSA_SHEAM</name>
<evidence type="ECO:0000255" key="1">
    <source>
        <dbReference type="HAMAP-Rule" id="MF_00313"/>
    </source>
</evidence>
<feature type="chain" id="PRO_1000048355" description="Glutaminase">
    <location>
        <begin position="1"/>
        <end position="304"/>
    </location>
</feature>
<feature type="binding site" evidence="1">
    <location>
        <position position="63"/>
    </location>
    <ligand>
        <name>substrate</name>
    </ligand>
</feature>
<feature type="binding site" evidence="1">
    <location>
        <position position="114"/>
    </location>
    <ligand>
        <name>substrate</name>
    </ligand>
</feature>
<feature type="binding site" evidence="1">
    <location>
        <position position="158"/>
    </location>
    <ligand>
        <name>substrate</name>
    </ligand>
</feature>
<feature type="binding site" evidence="1">
    <location>
        <position position="165"/>
    </location>
    <ligand>
        <name>substrate</name>
    </ligand>
</feature>
<feature type="binding site" evidence="1">
    <location>
        <position position="189"/>
    </location>
    <ligand>
        <name>substrate</name>
    </ligand>
</feature>
<feature type="binding site" evidence="1">
    <location>
        <position position="240"/>
    </location>
    <ligand>
        <name>substrate</name>
    </ligand>
</feature>
<feature type="binding site" evidence="1">
    <location>
        <position position="258"/>
    </location>
    <ligand>
        <name>substrate</name>
    </ligand>
</feature>
<dbReference type="EC" id="3.5.1.2" evidence="1"/>
<dbReference type="EMBL" id="CP000507">
    <property type="protein sequence ID" value="ABM00691.1"/>
    <property type="molecule type" value="Genomic_DNA"/>
</dbReference>
<dbReference type="RefSeq" id="WP_011760597.1">
    <property type="nucleotide sequence ID" value="NC_008700.1"/>
</dbReference>
<dbReference type="SMR" id="A1S8I4"/>
<dbReference type="STRING" id="326297.Sama_2487"/>
<dbReference type="KEGG" id="saz:Sama_2487"/>
<dbReference type="eggNOG" id="COG2066">
    <property type="taxonomic scope" value="Bacteria"/>
</dbReference>
<dbReference type="HOGENOM" id="CLU_027932_1_1_6"/>
<dbReference type="OrthoDB" id="9788822at2"/>
<dbReference type="Proteomes" id="UP000009175">
    <property type="component" value="Chromosome"/>
</dbReference>
<dbReference type="GO" id="GO:0004359">
    <property type="term" value="F:glutaminase activity"/>
    <property type="evidence" value="ECO:0007669"/>
    <property type="project" value="UniProtKB-UniRule"/>
</dbReference>
<dbReference type="GO" id="GO:0006537">
    <property type="term" value="P:glutamate biosynthetic process"/>
    <property type="evidence" value="ECO:0007669"/>
    <property type="project" value="TreeGrafter"/>
</dbReference>
<dbReference type="GO" id="GO:0006543">
    <property type="term" value="P:glutamine catabolic process"/>
    <property type="evidence" value="ECO:0007669"/>
    <property type="project" value="TreeGrafter"/>
</dbReference>
<dbReference type="FunFam" id="3.40.710.10:FF:000005">
    <property type="entry name" value="Glutaminase"/>
    <property type="match status" value="1"/>
</dbReference>
<dbReference type="Gene3D" id="3.40.710.10">
    <property type="entry name" value="DD-peptidase/beta-lactamase superfamily"/>
    <property type="match status" value="1"/>
</dbReference>
<dbReference type="HAMAP" id="MF_00313">
    <property type="entry name" value="Glutaminase"/>
    <property type="match status" value="1"/>
</dbReference>
<dbReference type="InterPro" id="IPR012338">
    <property type="entry name" value="Beta-lactam/transpept-like"/>
</dbReference>
<dbReference type="InterPro" id="IPR015868">
    <property type="entry name" value="Glutaminase"/>
</dbReference>
<dbReference type="NCBIfam" id="TIGR03814">
    <property type="entry name" value="Gln_ase"/>
    <property type="match status" value="1"/>
</dbReference>
<dbReference type="NCBIfam" id="NF002132">
    <property type="entry name" value="PRK00971.1-1"/>
    <property type="match status" value="1"/>
</dbReference>
<dbReference type="NCBIfam" id="NF002133">
    <property type="entry name" value="PRK00971.1-2"/>
    <property type="match status" value="1"/>
</dbReference>
<dbReference type="PANTHER" id="PTHR12544">
    <property type="entry name" value="GLUTAMINASE"/>
    <property type="match status" value="1"/>
</dbReference>
<dbReference type="PANTHER" id="PTHR12544:SF29">
    <property type="entry name" value="GLUTAMINASE"/>
    <property type="match status" value="1"/>
</dbReference>
<dbReference type="Pfam" id="PF04960">
    <property type="entry name" value="Glutaminase"/>
    <property type="match status" value="1"/>
</dbReference>
<dbReference type="SUPFAM" id="SSF56601">
    <property type="entry name" value="beta-lactamase/transpeptidase-like"/>
    <property type="match status" value="1"/>
</dbReference>
<comment type="catalytic activity">
    <reaction evidence="1">
        <text>L-glutamine + H2O = L-glutamate + NH4(+)</text>
        <dbReference type="Rhea" id="RHEA:15889"/>
        <dbReference type="ChEBI" id="CHEBI:15377"/>
        <dbReference type="ChEBI" id="CHEBI:28938"/>
        <dbReference type="ChEBI" id="CHEBI:29985"/>
        <dbReference type="ChEBI" id="CHEBI:58359"/>
        <dbReference type="EC" id="3.5.1.2"/>
    </reaction>
</comment>
<comment type="subunit">
    <text evidence="1">Homotetramer.</text>
</comment>
<comment type="similarity">
    <text evidence="1">Belongs to the glutaminase family.</text>
</comment>